<name>Y2336_CANAL</name>
<accession>Q59WG5</accession>
<accession>A0A1D8PEZ8</accession>
<protein>
    <recommendedName>
        <fullName>Probable pathogenesis-related protein CaO19.2336</fullName>
    </recommendedName>
</protein>
<feature type="signal peptide" evidence="2">
    <location>
        <begin position="1"/>
        <end position="20"/>
    </location>
</feature>
<feature type="chain" id="PRO_0000429962" description="Probable pathogenesis-related protein CaO19.2336">
    <location>
        <begin position="21"/>
        <end position="202"/>
    </location>
</feature>
<feature type="domain" description="SCP">
    <location>
        <begin position="66"/>
        <end position="179"/>
    </location>
</feature>
<feature type="glycosylation site" description="N-linked (GlcNAc...) asparagine" evidence="2">
    <location>
        <position position="58"/>
    </location>
</feature>
<feature type="glycosylation site" description="N-linked (GlcNAc...) asparagine" evidence="2">
    <location>
        <position position="152"/>
    </location>
</feature>
<organism>
    <name type="scientific">Candida albicans (strain SC5314 / ATCC MYA-2876)</name>
    <name type="common">Yeast</name>
    <dbReference type="NCBI Taxonomy" id="237561"/>
    <lineage>
        <taxon>Eukaryota</taxon>
        <taxon>Fungi</taxon>
        <taxon>Dikarya</taxon>
        <taxon>Ascomycota</taxon>
        <taxon>Saccharomycotina</taxon>
        <taxon>Pichiomycetes</taxon>
        <taxon>Debaryomycetaceae</taxon>
        <taxon>Candida/Lodderomyces clade</taxon>
        <taxon>Candida</taxon>
    </lineage>
</organism>
<evidence type="ECO:0000250" key="1"/>
<evidence type="ECO:0000255" key="2"/>
<evidence type="ECO:0000269" key="3">
    <source>
    </source>
</evidence>
<evidence type="ECO:0000305" key="4"/>
<keyword id="KW-0325">Glycoprotein</keyword>
<keyword id="KW-1185">Reference proteome</keyword>
<keyword id="KW-0964">Secreted</keyword>
<keyword id="KW-0732">Signal</keyword>
<keyword id="KW-0843">Virulence</keyword>
<sequence length="202" mass="22667">MKTLLFIYLQLLLLLSIIIGRVVKVEYLHLVVEVEPSTITESCLSDGIDGYSGSFYLNTTFAELMLKEHNNKRKLHQSCPLKWSSELFNYASQFAAEYSCSGILQHSGGKYGENLAFGYSPIGAIEAWYDEGEMYVYGSENVYNHFTAIVWNNTNSLGCAYKSCDTTTNLNALYIVCSYYPPGNVIGYSSQNVFPLNSKMVN</sequence>
<dbReference type="EMBL" id="CP017623">
    <property type="protein sequence ID" value="AOW26708.1"/>
    <property type="molecule type" value="Genomic_DNA"/>
</dbReference>
<dbReference type="RefSeq" id="XP_713941.1">
    <property type="nucleotide sequence ID" value="XM_708848.1"/>
</dbReference>
<dbReference type="SMR" id="Q59WG5"/>
<dbReference type="BioGRID" id="1227484">
    <property type="interactions" value="1"/>
</dbReference>
<dbReference type="EnsemblFungi" id="C1_10810W_A-T">
    <property type="protein sequence ID" value="C1_10810W_A-T-p1"/>
    <property type="gene ID" value="C1_10810W_A"/>
</dbReference>
<dbReference type="GeneID" id="3644436"/>
<dbReference type="KEGG" id="cal:CAALFM_C110810WA"/>
<dbReference type="CGD" id="CAL0000186053">
    <property type="gene designation" value="orf19.9872"/>
</dbReference>
<dbReference type="VEuPathDB" id="FungiDB:C1_10810W_A"/>
<dbReference type="eggNOG" id="KOG3017">
    <property type="taxonomic scope" value="Eukaryota"/>
</dbReference>
<dbReference type="HOGENOM" id="CLU_035730_6_4_1"/>
<dbReference type="InParanoid" id="Q59WG5"/>
<dbReference type="OMA" id="NPGHYEQ"/>
<dbReference type="OrthoDB" id="337038at2759"/>
<dbReference type="PRO" id="PR:Q59WG5"/>
<dbReference type="Proteomes" id="UP000000559">
    <property type="component" value="Chromosome 1"/>
</dbReference>
<dbReference type="GO" id="GO:0005615">
    <property type="term" value="C:extracellular space"/>
    <property type="evidence" value="ECO:0000318"/>
    <property type="project" value="GO_Central"/>
</dbReference>
<dbReference type="GO" id="GO:0019953">
    <property type="term" value="P:sexual reproduction"/>
    <property type="evidence" value="ECO:0000318"/>
    <property type="project" value="GO_Central"/>
</dbReference>
<dbReference type="FunFam" id="3.40.33.10:FF:000071">
    <property type="entry name" value="Probable pathogenesis-related protein CaO19.2336"/>
    <property type="match status" value="1"/>
</dbReference>
<dbReference type="Gene3D" id="3.40.33.10">
    <property type="entry name" value="CAP"/>
    <property type="match status" value="1"/>
</dbReference>
<dbReference type="InterPro" id="IPR018244">
    <property type="entry name" value="Allrgn_V5/Tpx1_CS"/>
</dbReference>
<dbReference type="InterPro" id="IPR014044">
    <property type="entry name" value="CAP_dom"/>
</dbReference>
<dbReference type="InterPro" id="IPR035940">
    <property type="entry name" value="CAP_sf"/>
</dbReference>
<dbReference type="InterPro" id="IPR001283">
    <property type="entry name" value="CRISP-related"/>
</dbReference>
<dbReference type="PANTHER" id="PTHR10334">
    <property type="entry name" value="CYSTEINE-RICH SECRETORY PROTEIN-RELATED"/>
    <property type="match status" value="1"/>
</dbReference>
<dbReference type="Pfam" id="PF00188">
    <property type="entry name" value="CAP"/>
    <property type="match status" value="1"/>
</dbReference>
<dbReference type="PRINTS" id="PR00837">
    <property type="entry name" value="V5TPXLIKE"/>
</dbReference>
<dbReference type="SMART" id="SM00198">
    <property type="entry name" value="SCP"/>
    <property type="match status" value="1"/>
</dbReference>
<dbReference type="SUPFAM" id="SSF55797">
    <property type="entry name" value="PR-1-like"/>
    <property type="match status" value="1"/>
</dbReference>
<dbReference type="PROSITE" id="PS01010">
    <property type="entry name" value="CRISP_2"/>
    <property type="match status" value="1"/>
</dbReference>
<gene>
    <name type="ordered locus">CAALFM_C110810WA</name>
    <name type="ORF">CaO19.2336</name>
    <name type="ORF">CaO19.9872</name>
</gene>
<proteinExistence type="evidence at transcript level"/>
<comment type="function">
    <text evidence="1">Secreted protein that acts as a virulence factor during infections.</text>
</comment>
<comment type="subcellular location">
    <subcellularLocation>
        <location evidence="1">Secreted</location>
    </subcellularLocation>
</comment>
<comment type="induction">
    <text evidence="3">Expression is higher in white cells.</text>
</comment>
<comment type="similarity">
    <text evidence="4">Belongs to the CRISP family.</text>
</comment>
<reference key="1">
    <citation type="journal article" date="2004" name="Proc. Natl. Acad. Sci. U.S.A.">
        <title>The diploid genome sequence of Candida albicans.</title>
        <authorList>
            <person name="Jones T."/>
            <person name="Federspiel N.A."/>
            <person name="Chibana H."/>
            <person name="Dungan J."/>
            <person name="Kalman S."/>
            <person name="Magee B.B."/>
            <person name="Newport G."/>
            <person name="Thorstenson Y.R."/>
            <person name="Agabian N."/>
            <person name="Magee P.T."/>
            <person name="Davis R.W."/>
            <person name="Scherer S."/>
        </authorList>
    </citation>
    <scope>NUCLEOTIDE SEQUENCE [LARGE SCALE GENOMIC DNA]</scope>
    <source>
        <strain>SC5314 / ATCC MYA-2876</strain>
    </source>
</reference>
<reference key="2">
    <citation type="journal article" date="2007" name="Genome Biol.">
        <title>Assembly of the Candida albicans genome into sixteen supercontigs aligned on the eight chromosomes.</title>
        <authorList>
            <person name="van het Hoog M."/>
            <person name="Rast T.J."/>
            <person name="Martchenko M."/>
            <person name="Grindle S."/>
            <person name="Dignard D."/>
            <person name="Hogues H."/>
            <person name="Cuomo C."/>
            <person name="Berriman M."/>
            <person name="Scherer S."/>
            <person name="Magee B.B."/>
            <person name="Whiteway M."/>
            <person name="Chibana H."/>
            <person name="Nantel A."/>
            <person name="Magee P.T."/>
        </authorList>
    </citation>
    <scope>GENOME REANNOTATION</scope>
    <source>
        <strain>SC5314 / ATCC MYA-2876</strain>
    </source>
</reference>
<reference key="3">
    <citation type="journal article" date="2013" name="Genome Biol.">
        <title>Assembly of a phased diploid Candida albicans genome facilitates allele-specific measurements and provides a simple model for repeat and indel structure.</title>
        <authorList>
            <person name="Muzzey D."/>
            <person name="Schwartz K."/>
            <person name="Weissman J.S."/>
            <person name="Sherlock G."/>
        </authorList>
    </citation>
    <scope>NUCLEOTIDE SEQUENCE [LARGE SCALE GENOMIC DNA]</scope>
    <scope>GENOME REANNOTATION</scope>
    <source>
        <strain>SC5314 / ATCC MYA-2876</strain>
    </source>
</reference>
<reference key="4">
    <citation type="journal article" date="2013" name="Mol. Microbiol.">
        <title>A family of secreted pathogenesis-related proteins in Candida albicans.</title>
        <authorList>
            <person name="Rohm M."/>
            <person name="Lindemann E."/>
            <person name="Hiller E."/>
            <person name="Ermert D."/>
            <person name="Lemuth K."/>
            <person name="Trkulja D."/>
            <person name="Sogukpinar O."/>
            <person name="Brunner H."/>
            <person name="Rupp S."/>
            <person name="Urban C.F."/>
            <person name="Sohn K."/>
        </authorList>
    </citation>
    <scope>IDENTIFICATION</scope>
    <scope>INDUCTION</scope>
</reference>